<sequence>MLFLLLPLLAVLPGDGNADGLKEPLSFHVTWIASFYNHSWKQNLVSGWLSDLQTHTWDSNSSTIVFLCPWSRGNFSNEEWKELETLFRIRTIRSFEGIRRYAHELQFEYPFEIQVTGGCELHSGKVSGSFLQLAYQGSDFVSFQNNSWLPYPVAGNMAKHFCKVLNQNQHENDITHNLLSDTCPRFILGLLDAGKAHLQRQVKPEAWLSHGPSPGPGHLQLVCHVSGFYPKPVWVMWMRGEQEQQGTQRGDILPSADGTWYLRATLEVAAGEAADLSCRVKHSSLEGQDIVLYWEHHSSVGFIILAVIVPLLLLIGLALWFRKRCFC</sequence>
<reference key="1">
    <citation type="journal article" date="1989" name="J. Immunol.">
        <title>Expression of cDNA clones encoding the thymocyte antigens CD1a, b, c demonstrates a hierarchy of exclusion in fibroblasts.</title>
        <authorList>
            <person name="Aruffo A."/>
            <person name="Seed B."/>
        </authorList>
    </citation>
    <scope>NUCLEOTIDE SEQUENCE [MRNA]</scope>
    <scope>VARIANTS ILE-30 AND TRP-68</scope>
</reference>
<reference key="2">
    <citation type="journal article" date="1987" name="Proc. Natl. Acad. Sci. U.S.A.">
        <title>Structure and expression of the human thymocyte antigens CD1a, CD1b, and CD1c.</title>
        <authorList>
            <person name="Martin L.H."/>
            <person name="Calabi F."/>
            <person name="Lefebvre F.-A."/>
            <person name="Bilsland C.A.G."/>
            <person name="Milstein C."/>
        </authorList>
    </citation>
    <scope>NUCLEOTIDE SEQUENCE [GENOMIC DNA]</scope>
</reference>
<reference key="3">
    <citation type="journal article" date="2004" name="Nat. Genet.">
        <title>Complete sequencing and characterization of 21,243 full-length human cDNAs.</title>
        <authorList>
            <person name="Ota T."/>
            <person name="Suzuki Y."/>
            <person name="Nishikawa T."/>
            <person name="Otsuki T."/>
            <person name="Sugiyama T."/>
            <person name="Irie R."/>
            <person name="Wakamatsu A."/>
            <person name="Hayashi K."/>
            <person name="Sato H."/>
            <person name="Nagai K."/>
            <person name="Kimura K."/>
            <person name="Makita H."/>
            <person name="Sekine M."/>
            <person name="Obayashi M."/>
            <person name="Nishi T."/>
            <person name="Shibahara T."/>
            <person name="Tanaka T."/>
            <person name="Ishii S."/>
            <person name="Yamamoto J."/>
            <person name="Saito K."/>
            <person name="Kawai Y."/>
            <person name="Isono Y."/>
            <person name="Nakamura Y."/>
            <person name="Nagahari K."/>
            <person name="Murakami K."/>
            <person name="Yasuda T."/>
            <person name="Iwayanagi T."/>
            <person name="Wagatsuma M."/>
            <person name="Shiratori A."/>
            <person name="Sudo H."/>
            <person name="Hosoiri T."/>
            <person name="Kaku Y."/>
            <person name="Kodaira H."/>
            <person name="Kondo H."/>
            <person name="Sugawara M."/>
            <person name="Takahashi M."/>
            <person name="Kanda K."/>
            <person name="Yokoi T."/>
            <person name="Furuya T."/>
            <person name="Kikkawa E."/>
            <person name="Omura Y."/>
            <person name="Abe K."/>
            <person name="Kamihara K."/>
            <person name="Katsuta N."/>
            <person name="Sato K."/>
            <person name="Tanikawa M."/>
            <person name="Yamazaki M."/>
            <person name="Ninomiya K."/>
            <person name="Ishibashi T."/>
            <person name="Yamashita H."/>
            <person name="Murakawa K."/>
            <person name="Fujimori K."/>
            <person name="Tanai H."/>
            <person name="Kimata M."/>
            <person name="Watanabe M."/>
            <person name="Hiraoka S."/>
            <person name="Chiba Y."/>
            <person name="Ishida S."/>
            <person name="Ono Y."/>
            <person name="Takiguchi S."/>
            <person name="Watanabe S."/>
            <person name="Yosida M."/>
            <person name="Hotuta T."/>
            <person name="Kusano J."/>
            <person name="Kanehori K."/>
            <person name="Takahashi-Fujii A."/>
            <person name="Hara H."/>
            <person name="Tanase T.-O."/>
            <person name="Nomura Y."/>
            <person name="Togiya S."/>
            <person name="Komai F."/>
            <person name="Hara R."/>
            <person name="Takeuchi K."/>
            <person name="Arita M."/>
            <person name="Imose N."/>
            <person name="Musashino K."/>
            <person name="Yuuki H."/>
            <person name="Oshima A."/>
            <person name="Sasaki N."/>
            <person name="Aotsuka S."/>
            <person name="Yoshikawa Y."/>
            <person name="Matsunawa H."/>
            <person name="Ichihara T."/>
            <person name="Shiohata N."/>
            <person name="Sano S."/>
            <person name="Moriya S."/>
            <person name="Momiyama H."/>
            <person name="Satoh N."/>
            <person name="Takami S."/>
            <person name="Terashima Y."/>
            <person name="Suzuki O."/>
            <person name="Nakagawa S."/>
            <person name="Senoh A."/>
            <person name="Mizoguchi H."/>
            <person name="Goto Y."/>
            <person name="Shimizu F."/>
            <person name="Wakebe H."/>
            <person name="Hishigaki H."/>
            <person name="Watanabe T."/>
            <person name="Sugiyama A."/>
            <person name="Takemoto M."/>
            <person name="Kawakami B."/>
            <person name="Yamazaki M."/>
            <person name="Watanabe K."/>
            <person name="Kumagai A."/>
            <person name="Itakura S."/>
            <person name="Fukuzumi Y."/>
            <person name="Fujimori Y."/>
            <person name="Komiyama M."/>
            <person name="Tashiro H."/>
            <person name="Tanigami A."/>
            <person name="Fujiwara T."/>
            <person name="Ono T."/>
            <person name="Yamada K."/>
            <person name="Fujii Y."/>
            <person name="Ozaki K."/>
            <person name="Hirao M."/>
            <person name="Ohmori Y."/>
            <person name="Kawabata A."/>
            <person name="Hikiji T."/>
            <person name="Kobatake N."/>
            <person name="Inagaki H."/>
            <person name="Ikema Y."/>
            <person name="Okamoto S."/>
            <person name="Okitani R."/>
            <person name="Kawakami T."/>
            <person name="Noguchi S."/>
            <person name="Itoh T."/>
            <person name="Shigeta K."/>
            <person name="Senba T."/>
            <person name="Matsumura K."/>
            <person name="Nakajima Y."/>
            <person name="Mizuno T."/>
            <person name="Morinaga M."/>
            <person name="Sasaki M."/>
            <person name="Togashi T."/>
            <person name="Oyama M."/>
            <person name="Hata H."/>
            <person name="Watanabe M."/>
            <person name="Komatsu T."/>
            <person name="Mizushima-Sugano J."/>
            <person name="Satoh T."/>
            <person name="Shirai Y."/>
            <person name="Takahashi Y."/>
            <person name="Nakagawa K."/>
            <person name="Okumura K."/>
            <person name="Nagase T."/>
            <person name="Nomura N."/>
            <person name="Kikuchi H."/>
            <person name="Masuho Y."/>
            <person name="Yamashita R."/>
            <person name="Nakai K."/>
            <person name="Yada T."/>
            <person name="Nakamura Y."/>
            <person name="Ohara O."/>
            <person name="Isogai T."/>
            <person name="Sugano S."/>
        </authorList>
    </citation>
    <scope>NUCLEOTIDE SEQUENCE [LARGE SCALE MRNA]</scope>
    <source>
        <tissue>Thymus</tissue>
    </source>
</reference>
<reference key="4">
    <citation type="journal article" date="2006" name="Nature">
        <title>The DNA sequence and biological annotation of human chromosome 1.</title>
        <authorList>
            <person name="Gregory S.G."/>
            <person name="Barlow K.F."/>
            <person name="McLay K.E."/>
            <person name="Kaul R."/>
            <person name="Swarbreck D."/>
            <person name="Dunham A."/>
            <person name="Scott C.E."/>
            <person name="Howe K.L."/>
            <person name="Woodfine K."/>
            <person name="Spencer C.C.A."/>
            <person name="Jones M.C."/>
            <person name="Gillson C."/>
            <person name="Searle S."/>
            <person name="Zhou Y."/>
            <person name="Kokocinski F."/>
            <person name="McDonald L."/>
            <person name="Evans R."/>
            <person name="Phillips K."/>
            <person name="Atkinson A."/>
            <person name="Cooper R."/>
            <person name="Jones C."/>
            <person name="Hall R.E."/>
            <person name="Andrews T.D."/>
            <person name="Lloyd C."/>
            <person name="Ainscough R."/>
            <person name="Almeida J.P."/>
            <person name="Ambrose K.D."/>
            <person name="Anderson F."/>
            <person name="Andrew R.W."/>
            <person name="Ashwell R.I.S."/>
            <person name="Aubin K."/>
            <person name="Babbage A.K."/>
            <person name="Bagguley C.L."/>
            <person name="Bailey J."/>
            <person name="Beasley H."/>
            <person name="Bethel G."/>
            <person name="Bird C.P."/>
            <person name="Bray-Allen S."/>
            <person name="Brown J.Y."/>
            <person name="Brown A.J."/>
            <person name="Buckley D."/>
            <person name="Burton J."/>
            <person name="Bye J."/>
            <person name="Carder C."/>
            <person name="Chapman J.C."/>
            <person name="Clark S.Y."/>
            <person name="Clarke G."/>
            <person name="Clee C."/>
            <person name="Cobley V."/>
            <person name="Collier R.E."/>
            <person name="Corby N."/>
            <person name="Coville G.J."/>
            <person name="Davies J."/>
            <person name="Deadman R."/>
            <person name="Dunn M."/>
            <person name="Earthrowl M."/>
            <person name="Ellington A.G."/>
            <person name="Errington H."/>
            <person name="Frankish A."/>
            <person name="Frankland J."/>
            <person name="French L."/>
            <person name="Garner P."/>
            <person name="Garnett J."/>
            <person name="Gay L."/>
            <person name="Ghori M.R.J."/>
            <person name="Gibson R."/>
            <person name="Gilby L.M."/>
            <person name="Gillett W."/>
            <person name="Glithero R.J."/>
            <person name="Grafham D.V."/>
            <person name="Griffiths C."/>
            <person name="Griffiths-Jones S."/>
            <person name="Grocock R."/>
            <person name="Hammond S."/>
            <person name="Harrison E.S.I."/>
            <person name="Hart E."/>
            <person name="Haugen E."/>
            <person name="Heath P.D."/>
            <person name="Holmes S."/>
            <person name="Holt K."/>
            <person name="Howden P.J."/>
            <person name="Hunt A.R."/>
            <person name="Hunt S.E."/>
            <person name="Hunter G."/>
            <person name="Isherwood J."/>
            <person name="James R."/>
            <person name="Johnson C."/>
            <person name="Johnson D."/>
            <person name="Joy A."/>
            <person name="Kay M."/>
            <person name="Kershaw J.K."/>
            <person name="Kibukawa M."/>
            <person name="Kimberley A.M."/>
            <person name="King A."/>
            <person name="Knights A.J."/>
            <person name="Lad H."/>
            <person name="Laird G."/>
            <person name="Lawlor S."/>
            <person name="Leongamornlert D.A."/>
            <person name="Lloyd D.M."/>
            <person name="Loveland J."/>
            <person name="Lovell J."/>
            <person name="Lush M.J."/>
            <person name="Lyne R."/>
            <person name="Martin S."/>
            <person name="Mashreghi-Mohammadi M."/>
            <person name="Matthews L."/>
            <person name="Matthews N.S.W."/>
            <person name="McLaren S."/>
            <person name="Milne S."/>
            <person name="Mistry S."/>
            <person name="Moore M.J.F."/>
            <person name="Nickerson T."/>
            <person name="O'Dell C.N."/>
            <person name="Oliver K."/>
            <person name="Palmeiri A."/>
            <person name="Palmer S.A."/>
            <person name="Parker A."/>
            <person name="Patel D."/>
            <person name="Pearce A.V."/>
            <person name="Peck A.I."/>
            <person name="Pelan S."/>
            <person name="Phelps K."/>
            <person name="Phillimore B.J."/>
            <person name="Plumb R."/>
            <person name="Rajan J."/>
            <person name="Raymond C."/>
            <person name="Rouse G."/>
            <person name="Saenphimmachak C."/>
            <person name="Sehra H.K."/>
            <person name="Sheridan E."/>
            <person name="Shownkeen R."/>
            <person name="Sims S."/>
            <person name="Skuce C.D."/>
            <person name="Smith M."/>
            <person name="Steward C."/>
            <person name="Subramanian S."/>
            <person name="Sycamore N."/>
            <person name="Tracey A."/>
            <person name="Tromans A."/>
            <person name="Van Helmond Z."/>
            <person name="Wall M."/>
            <person name="Wallis J.M."/>
            <person name="White S."/>
            <person name="Whitehead S.L."/>
            <person name="Wilkinson J.E."/>
            <person name="Willey D.L."/>
            <person name="Williams H."/>
            <person name="Wilming L."/>
            <person name="Wray P.W."/>
            <person name="Wu Z."/>
            <person name="Coulson A."/>
            <person name="Vaudin M."/>
            <person name="Sulston J.E."/>
            <person name="Durbin R.M."/>
            <person name="Hubbard T."/>
            <person name="Wooster R."/>
            <person name="Dunham I."/>
            <person name="Carter N.P."/>
            <person name="McVean G."/>
            <person name="Ross M.T."/>
            <person name="Harrow J."/>
            <person name="Olson M.V."/>
            <person name="Beck S."/>
            <person name="Rogers J."/>
            <person name="Bentley D.R."/>
        </authorList>
    </citation>
    <scope>NUCLEOTIDE SEQUENCE [LARGE SCALE GENOMIC DNA]</scope>
</reference>
<reference key="5">
    <citation type="submission" date="2005-09" db="EMBL/GenBank/DDBJ databases">
        <authorList>
            <person name="Mural R.J."/>
            <person name="Istrail S."/>
            <person name="Sutton G.G."/>
            <person name="Florea L."/>
            <person name="Halpern A.L."/>
            <person name="Mobarry C.M."/>
            <person name="Lippert R."/>
            <person name="Walenz B."/>
            <person name="Shatkay H."/>
            <person name="Dew I."/>
            <person name="Miller J.R."/>
            <person name="Flanigan M.J."/>
            <person name="Edwards N.J."/>
            <person name="Bolanos R."/>
            <person name="Fasulo D."/>
            <person name="Halldorsson B.V."/>
            <person name="Hannenhalli S."/>
            <person name="Turner R."/>
            <person name="Yooseph S."/>
            <person name="Lu F."/>
            <person name="Nusskern D.R."/>
            <person name="Shue B.C."/>
            <person name="Zheng X.H."/>
            <person name="Zhong F."/>
            <person name="Delcher A.L."/>
            <person name="Huson D.H."/>
            <person name="Kravitz S.A."/>
            <person name="Mouchard L."/>
            <person name="Reinert K."/>
            <person name="Remington K.A."/>
            <person name="Clark A.G."/>
            <person name="Waterman M.S."/>
            <person name="Eichler E.E."/>
            <person name="Adams M.D."/>
            <person name="Hunkapiller M.W."/>
            <person name="Myers E.W."/>
            <person name="Venter J.C."/>
        </authorList>
    </citation>
    <scope>NUCLEOTIDE SEQUENCE [LARGE SCALE GENOMIC DNA]</scope>
</reference>
<reference key="6">
    <citation type="journal article" date="1999" name="Tissue Antigens">
        <title>Polymorphism of human CD1 genes.</title>
        <authorList>
            <person name="Han M."/>
            <person name="Hannick L.I."/>
            <person name="DiBrino M."/>
            <person name="Robinson M.A."/>
        </authorList>
    </citation>
    <scope>NUCLEOTIDE SEQUENCE [GENOMIC DNA] OF 18-108</scope>
</reference>
<reference key="7">
    <citation type="journal article" date="1989" name="J. Invest. Dermatol.">
        <title>Molecular cloning of CD1a (T6), a human epidermal dendritic cell marker related to class I MHC molecules.</title>
        <authorList>
            <person name="Longley J."/>
            <person name="Kraus J."/>
            <person name="Alonso M."/>
            <person name="Edelson R."/>
        </authorList>
    </citation>
    <scope>NUCLEOTIDE SEQUENCE [MRNA] OF 21-327</scope>
</reference>
<reference key="8">
    <citation type="journal article" date="1986" name="Nature">
        <title>A novel family of human major histocompatibility complex-related genes not mapping to chromosome 6.</title>
        <authorList>
            <person name="Calabi F."/>
            <person name="Milstein C."/>
        </authorList>
    </citation>
    <scope>NUCLEOTIDE SEQUENCE [MRNA] OF 99-327</scope>
    <source>
        <tissue>T-cell</tissue>
    </source>
</reference>
<reference key="9">
    <citation type="journal article" date="1986" name="Proc. Natl. Acad. Sci. U.S.A.">
        <title>Isolation of CD1 genes: a family of major histocompatibility complex-related differentiation antigens.</title>
        <authorList>
            <person name="Martin L.H."/>
            <person name="Calabi F."/>
            <person name="Milstein C."/>
        </authorList>
    </citation>
    <scope>NUCLEOTIDE SEQUENCE [GENOMIC DNA] OF 202-294</scope>
</reference>
<reference key="10">
    <citation type="journal article" date="2001" name="J. Invest. Dermatol.">
        <title>CD1a molecules traffic through the early recycling endosomal pathway in human Langerhans cells.</title>
        <authorList>
            <person name="Salamero J."/>
            <person name="Bausinger H."/>
            <person name="Mommaas A.M."/>
            <person name="Lipsker D."/>
            <person name="Proamer F."/>
            <person name="Cazenave J.-P."/>
            <person name="Goud B."/>
            <person name="de la Salle H."/>
            <person name="Hanau D."/>
        </authorList>
    </citation>
    <scope>FUNCTION</scope>
    <scope>SUBCELLULAR LOCATION</scope>
    <scope>TISSUE SPECIFICITY</scope>
</reference>
<reference key="11">
    <citation type="journal article" date="2005" name="J. Immunol.">
        <title>CD1a-, b-, and c-restricted TCRs recognize both self and foreign antigens.</title>
        <authorList>
            <person name="Vincent M.S."/>
            <person name="Xiong X."/>
            <person name="Grant E.P."/>
            <person name="Peng W."/>
            <person name="Brenner M.B."/>
        </authorList>
    </citation>
    <scope>FUNCTION</scope>
</reference>
<reference key="12">
    <citation type="journal article" date="2008" name="J. Immunol.">
        <title>Regulation of CD1a surface expression and antigen presentation by invariant chain and lipid rafts.</title>
        <authorList>
            <person name="Sloma I."/>
            <person name="Zilber M.-T."/>
            <person name="Vasselon T."/>
            <person name="Setterblad N."/>
            <person name="Cavallari M."/>
            <person name="Mori L."/>
            <person name="De Libero G."/>
            <person name="Charron D."/>
            <person name="Mooney N."/>
            <person name="Gelin C."/>
        </authorList>
    </citation>
    <scope>FUNCTION</scope>
    <scope>SUBCELLULAR LOCATION</scope>
    <scope>INTERACTION WITH CD47</scope>
    <scope>TISSUE SPECIFICITY</scope>
</reference>
<reference key="13">
    <citation type="journal article" date="2003" name="Nat. Immunol.">
        <title>Crystal structure of CD1a in complex with a sulfatide self antigen at a resolution of 2.15 A.</title>
        <authorList>
            <person name="Zajonc D.M."/>
            <person name="Elsliger M.-A."/>
            <person name="Teyton L."/>
            <person name="Wilson I.A."/>
        </authorList>
    </citation>
    <scope>X-RAY CRYSTALLOGRAPHY (2.15 ANGSTROMS) OF 18-300 IN COMPLEX WITH B2M AND SULFATIDE SELF-ANTIGEN</scope>
    <scope>IDENTIFICATION BY MASS SPECTROMETRY</scope>
    <scope>GLYCOSYLATION AT ASN-37; ASN-74 AND ASN-145</scope>
    <scope>DISULFIDE BOND</scope>
</reference>
<reference key="14">
    <citation type="journal article" date="2005" name="Immunity">
        <title>Molecular mechanism of lipopeptide presentation by CD1a.</title>
        <authorList>
            <person name="Zajonc D.M."/>
            <person name="Crispin M.D."/>
            <person name="Bowden T.A."/>
            <person name="Young D.C."/>
            <person name="Cheng T.-Y."/>
            <person name="Hu J."/>
            <person name="Costello C.E."/>
            <person name="Rudd P.M."/>
            <person name="Dwek R.A."/>
            <person name="Miller M.J."/>
            <person name="Brenner M.B."/>
            <person name="Moody D.B."/>
            <person name="Wilson I.A."/>
        </authorList>
    </citation>
    <scope>X-RAY CRYSTALLOGRAPHY (2.8 ANGSTROMS) OF 18-294 IN COMPLEX WITH B2M AND LIPOPEPTIDE</scope>
    <scope>GLYCOSYLATION AT ASN-37; ASN-74 AND ASN-145</scope>
    <scope>DISULFIDE BOND</scope>
</reference>
<reference key="15">
    <citation type="journal article" date="2015" name="Nat. Immunol.">
        <title>alphabeta T cell antigen receptor recognition of CD1a presenting self lipid ligands.</title>
        <authorList>
            <person name="Birkinshaw R.W."/>
            <person name="Pellicci D.G."/>
            <person name="Cheng T.Y."/>
            <person name="Keller A.N."/>
            <person name="Sandoval-Romero M."/>
            <person name="Gras S."/>
            <person name="de Jong A."/>
            <person name="Uldrich A.P."/>
            <person name="Moody D.B."/>
            <person name="Godfrey D.I."/>
            <person name="Rossjohn J."/>
        </authorList>
    </citation>
    <scope>X-RAY CRYSTALLOGRAPHY (1.91 ANGSTROMS) OF 21-295</scope>
    <scope>DISULFIDE BONDS</scope>
    <scope>GLYCOSYLATION AT ASN-74 AND ASN-145</scope>
</reference>
<reference key="16">
    <citation type="journal article" date="2001" name="Hum. Immunol.">
        <title>Structural characterization of two CD1A allelic variants.</title>
        <authorList>
            <person name="Oteo M."/>
            <person name="Arribas P."/>
            <person name="Setien F."/>
            <person name="Parra J.F."/>
            <person name="Mirones I."/>
            <person name="Gomez del Moral M."/>
            <person name="Martinez-Naves E."/>
        </authorList>
    </citation>
    <scope>VARIANTS ILE-30 AND TRP-68</scope>
    <scope>SUBCELLULAR LOCATION</scope>
</reference>
<protein>
    <recommendedName>
        <fullName>T-cell surface glycoprotein CD1a</fullName>
    </recommendedName>
    <alternativeName>
        <fullName>T-cell surface antigen T6/Leu-6</fullName>
        <shortName>hTa1 thymocyte antigen</shortName>
    </alternativeName>
    <cdAntigenName>CD1a</cdAntigenName>
</protein>
<feature type="signal peptide">
    <location>
        <begin position="1"/>
        <end position="16"/>
    </location>
</feature>
<feature type="chain" id="PRO_0000014578" description="T-cell surface glycoprotein CD1a">
    <location>
        <begin position="17"/>
        <end position="327"/>
    </location>
</feature>
<feature type="topological domain" description="Extracellular" evidence="1">
    <location>
        <begin position="17"/>
        <end position="300"/>
    </location>
</feature>
<feature type="transmembrane region" description="Helical" evidence="1">
    <location>
        <begin position="301"/>
        <end position="321"/>
    </location>
</feature>
<feature type="topological domain" description="Cytoplasmic" evidence="1">
    <location>
        <begin position="322"/>
        <end position="327"/>
    </location>
</feature>
<feature type="domain" description="Ig-like">
    <location>
        <begin position="184"/>
        <end position="291"/>
    </location>
</feature>
<feature type="binding site" evidence="4 11">
    <location>
        <begin position="90"/>
        <end position="94"/>
    </location>
    <ligand>
        <name>a D-galactosylceramide</name>
        <dbReference type="ChEBI" id="CHEBI:36498"/>
    </ligand>
</feature>
<feature type="binding site" evidence="4 11">
    <location>
        <position position="171"/>
    </location>
    <ligand>
        <name>a D-galactosylceramide</name>
        <dbReference type="ChEBI" id="CHEBI:36498"/>
    </ligand>
</feature>
<feature type="binding site" evidence="4 11">
    <location>
        <position position="175"/>
    </location>
    <ligand>
        <name>a D-galactosylceramide</name>
        <dbReference type="ChEBI" id="CHEBI:36498"/>
    </ligand>
</feature>
<feature type="glycosylation site" description="N-linked (GlcNAc...) asparagine" evidence="4 5">
    <location>
        <position position="37"/>
    </location>
</feature>
<feature type="glycosylation site" description="N-linked (GlcNAc...) asparagine" evidence="1">
    <location>
        <position position="60"/>
    </location>
</feature>
<feature type="glycosylation site" description="N-linked (GlcNAc...) asparagine" evidence="4 5 8">
    <location>
        <position position="74"/>
    </location>
</feature>
<feature type="glycosylation site" description="N-linked (GlcNAc...) asparagine" evidence="4 5 8">
    <location>
        <position position="145"/>
    </location>
</feature>
<feature type="disulfide bond" evidence="8 13">
    <location>
        <begin position="119"/>
        <end position="183"/>
    </location>
</feature>
<feature type="disulfide bond" evidence="4 5 8 11 12 13">
    <location>
        <begin position="223"/>
        <end position="278"/>
    </location>
</feature>
<feature type="sequence variant" id="VAR_062522" description="In dbSNP:rs3087217.">
    <original>K</original>
    <variation>N</variation>
    <location>
        <position position="22"/>
    </location>
</feature>
<feature type="sequence variant" id="VAR_010209" description="In dbSNP:rs2269714." evidence="3 9">
    <original>T</original>
    <variation>I</variation>
    <location>
        <position position="30"/>
    </location>
</feature>
<feature type="sequence variant" id="VAR_010210" description="In dbSNP:rs2269715." evidence="3 9">
    <original>C</original>
    <variation>W</variation>
    <location>
        <position position="68"/>
    </location>
</feature>
<feature type="sequence conflict" description="In Ref. 7; AAA51933." evidence="10" ref="7">
    <original>WS</original>
    <variation>V</variation>
    <location>
        <begin position="70"/>
        <end position="71"/>
    </location>
</feature>
<feature type="strand" evidence="15">
    <location>
        <begin position="27"/>
        <end position="37"/>
    </location>
</feature>
<feature type="strand" evidence="15">
    <location>
        <begin position="40"/>
        <end position="49"/>
    </location>
</feature>
<feature type="strand" evidence="15">
    <location>
        <begin position="52"/>
        <end position="58"/>
    </location>
</feature>
<feature type="turn" evidence="15">
    <location>
        <begin position="59"/>
        <end position="62"/>
    </location>
</feature>
<feature type="strand" evidence="15">
    <location>
        <begin position="63"/>
        <end position="68"/>
    </location>
</feature>
<feature type="helix" evidence="15">
    <location>
        <begin position="69"/>
        <end position="72"/>
    </location>
</feature>
<feature type="helix" evidence="15">
    <location>
        <begin position="77"/>
        <end position="101"/>
    </location>
</feature>
<feature type="turn" evidence="15">
    <location>
        <begin position="102"/>
        <end position="106"/>
    </location>
</feature>
<feature type="strand" evidence="15">
    <location>
        <begin position="109"/>
        <end position="119"/>
    </location>
</feature>
<feature type="strand" evidence="15">
    <location>
        <begin position="129"/>
        <end position="135"/>
    </location>
</feature>
<feature type="strand" evidence="15">
    <location>
        <begin position="138"/>
        <end position="144"/>
    </location>
</feature>
<feature type="strand" evidence="15">
    <location>
        <begin position="147"/>
        <end position="150"/>
    </location>
</feature>
<feature type="helix" evidence="15">
    <location>
        <begin position="152"/>
        <end position="154"/>
    </location>
</feature>
<feature type="helix" evidence="15">
    <location>
        <begin position="155"/>
        <end position="165"/>
    </location>
</feature>
<feature type="helix" evidence="15">
    <location>
        <begin position="169"/>
        <end position="180"/>
    </location>
</feature>
<feature type="helix" evidence="15">
    <location>
        <begin position="182"/>
        <end position="191"/>
    </location>
</feature>
<feature type="turn" evidence="15">
    <location>
        <begin position="192"/>
        <end position="194"/>
    </location>
</feature>
<feature type="helix" evidence="15">
    <location>
        <begin position="195"/>
        <end position="198"/>
    </location>
</feature>
<feature type="strand" evidence="15">
    <location>
        <begin position="205"/>
        <end position="210"/>
    </location>
</feature>
<feature type="strand" evidence="15">
    <location>
        <begin position="218"/>
        <end position="231"/>
    </location>
</feature>
<feature type="strand" evidence="15">
    <location>
        <begin position="234"/>
        <end position="239"/>
    </location>
</feature>
<feature type="strand" evidence="14">
    <location>
        <begin position="248"/>
        <end position="254"/>
    </location>
</feature>
<feature type="strand" evidence="16">
    <location>
        <begin position="256"/>
        <end position="258"/>
    </location>
</feature>
<feature type="strand" evidence="15">
    <location>
        <begin position="260"/>
        <end position="269"/>
    </location>
</feature>
<feature type="helix" evidence="15">
    <location>
        <begin position="270"/>
        <end position="272"/>
    </location>
</feature>
<feature type="strand" evidence="15">
    <location>
        <begin position="276"/>
        <end position="281"/>
    </location>
</feature>
<feature type="helix" evidence="15">
    <location>
        <begin position="283"/>
        <end position="285"/>
    </location>
</feature>
<feature type="strand" evidence="15">
    <location>
        <begin position="290"/>
        <end position="294"/>
    </location>
</feature>
<evidence type="ECO:0000255" key="1"/>
<evidence type="ECO:0000269" key="2">
    <source>
    </source>
</evidence>
<evidence type="ECO:0000269" key="3">
    <source>
    </source>
</evidence>
<evidence type="ECO:0000269" key="4">
    <source>
    </source>
</evidence>
<evidence type="ECO:0000269" key="5">
    <source>
    </source>
</evidence>
<evidence type="ECO:0000269" key="6">
    <source>
    </source>
</evidence>
<evidence type="ECO:0000269" key="7">
    <source>
    </source>
</evidence>
<evidence type="ECO:0000269" key="8">
    <source>
    </source>
</evidence>
<evidence type="ECO:0000269" key="9">
    <source>
    </source>
</evidence>
<evidence type="ECO:0000305" key="10"/>
<evidence type="ECO:0007744" key="11">
    <source>
        <dbReference type="PDB" id="1ONQ"/>
    </source>
</evidence>
<evidence type="ECO:0007744" key="12">
    <source>
        <dbReference type="PDB" id="1XZ0"/>
    </source>
</evidence>
<evidence type="ECO:0007744" key="13">
    <source>
        <dbReference type="PDB" id="4X6C"/>
    </source>
</evidence>
<evidence type="ECO:0007829" key="14">
    <source>
        <dbReference type="PDB" id="4X6C"/>
    </source>
</evidence>
<evidence type="ECO:0007829" key="15">
    <source>
        <dbReference type="PDB" id="5J1A"/>
    </source>
</evidence>
<evidence type="ECO:0007829" key="16">
    <source>
        <dbReference type="PDB" id="7RYN"/>
    </source>
</evidence>
<comment type="function">
    <text evidence="2 6 7">Antigen-presenting protein that binds self and non-self lipid and glycolipid antigens and presents them to T-cell receptors on natural killer T-cells.</text>
</comment>
<comment type="subunit">
    <text evidence="4 5 7">Heterodimer with B2M (beta-2-microglobulin). Interacts with CD74.</text>
</comment>
<comment type="interaction">
    <interactant intactId="EBI-1036766">
        <id>P06126</id>
    </interactant>
    <interactant intactId="EBI-714718">
        <id>P61769</id>
        <label>B2M</label>
    </interactant>
    <organismsDiffer>false</organismsDiffer>
    <experiments>2</experiments>
</comment>
<comment type="subcellular location">
    <subcellularLocation>
        <location evidence="2 3 7">Cell membrane</location>
        <topology evidence="1">Single-pass type I membrane protein</topology>
    </subcellularLocation>
    <subcellularLocation>
        <location evidence="7">Membrane raft</location>
        <topology evidence="1">Single-pass type I membrane protein</topology>
    </subcellularLocation>
    <subcellularLocation>
        <location evidence="2">Endosome membrane</location>
        <topology evidence="1">Single-pass type I membrane protein</topology>
    </subcellularLocation>
    <text evidence="2 7">Subject to intracellular trafficking between the cell membrane and endosomes (PubMed:11231314). Localizes to cell surface lipid rafts (PubMed:18178838).</text>
</comment>
<comment type="tissue specificity">
    <text evidence="2 7">Expressed on cortical thymocytes, epidermal Langerhans cells, dendritic cells, on certain T-cell leukemias, and in various other tissues.</text>
</comment>
<comment type="miscellaneous">
    <text>During protein synthesis and maturation, CD1 family members bind endogenous lipids that are replaced by lipid or glycolipid antigens when the proteins are internalized and pass through endosomes, before trafficking back to the cell surface.</text>
</comment>
<keyword id="KW-0002">3D-structure</keyword>
<keyword id="KW-1064">Adaptive immunity</keyword>
<keyword id="KW-1003">Cell membrane</keyword>
<keyword id="KW-1015">Disulfide bond</keyword>
<keyword id="KW-0967">Endosome</keyword>
<keyword id="KW-0325">Glycoprotein</keyword>
<keyword id="KW-0391">Immunity</keyword>
<keyword id="KW-0393">Immunoglobulin domain</keyword>
<keyword id="KW-0472">Membrane</keyword>
<keyword id="KW-1267">Proteomics identification</keyword>
<keyword id="KW-1185">Reference proteome</keyword>
<keyword id="KW-0732">Signal</keyword>
<keyword id="KW-0812">Transmembrane</keyword>
<keyword id="KW-1133">Transmembrane helix</keyword>
<proteinExistence type="evidence at protein level"/>
<gene>
    <name type="primary">CD1A</name>
</gene>
<accession>P06126</accession>
<accession>D3DVD7</accession>
<accession>Q13962</accession>
<accession>Q5TDJ8</accession>
<accession>Q9UMM4</accession>
<accession>Q9Y5M5</accession>
<dbReference type="EMBL" id="M28825">
    <property type="protein sequence ID" value="AAA51931.1"/>
    <property type="molecule type" value="mRNA"/>
</dbReference>
<dbReference type="EMBL" id="M22167">
    <property type="protein sequence ID" value="AAA51932.1"/>
    <property type="molecule type" value="Genomic_DNA"/>
</dbReference>
<dbReference type="EMBL" id="M22080">
    <property type="protein sequence ID" value="AAA51932.1"/>
    <property type="status" value="JOINED"/>
    <property type="molecule type" value="Genomic_DNA"/>
</dbReference>
<dbReference type="EMBL" id="M22163">
    <property type="protein sequence ID" value="AAA51932.1"/>
    <property type="status" value="JOINED"/>
    <property type="molecule type" value="Genomic_DNA"/>
</dbReference>
<dbReference type="EMBL" id="M22164">
    <property type="protein sequence ID" value="AAA51932.1"/>
    <property type="status" value="JOINED"/>
    <property type="molecule type" value="Genomic_DNA"/>
</dbReference>
<dbReference type="EMBL" id="M22165">
    <property type="protein sequence ID" value="AAA51932.1"/>
    <property type="status" value="JOINED"/>
    <property type="molecule type" value="Genomic_DNA"/>
</dbReference>
<dbReference type="EMBL" id="M22166">
    <property type="protein sequence ID" value="AAA51932.1"/>
    <property type="status" value="JOINED"/>
    <property type="molecule type" value="Genomic_DNA"/>
</dbReference>
<dbReference type="EMBL" id="AK312945">
    <property type="protein sequence ID" value="BAG35786.1"/>
    <property type="molecule type" value="mRNA"/>
</dbReference>
<dbReference type="EMBL" id="AL121986">
    <property type="status" value="NOT_ANNOTATED_CDS"/>
    <property type="molecule type" value="Genomic_DNA"/>
</dbReference>
<dbReference type="EMBL" id="CH471121">
    <property type="protein sequence ID" value="EAW52843.1"/>
    <property type="molecule type" value="Genomic_DNA"/>
</dbReference>
<dbReference type="EMBL" id="CH471121">
    <property type="protein sequence ID" value="EAW52844.1"/>
    <property type="molecule type" value="Genomic_DNA"/>
</dbReference>
<dbReference type="EMBL" id="AF142665">
    <property type="protein sequence ID" value="AAD37578.1"/>
    <property type="molecule type" value="Genomic_DNA"/>
</dbReference>
<dbReference type="EMBL" id="M27735">
    <property type="protein sequence ID" value="AAA51933.1"/>
    <property type="molecule type" value="mRNA"/>
</dbReference>
<dbReference type="EMBL" id="X04450">
    <property type="protein sequence ID" value="CAA28049.1"/>
    <property type="molecule type" value="mRNA"/>
</dbReference>
<dbReference type="EMBL" id="M14663">
    <property type="protein sequence ID" value="AAA51934.1"/>
    <property type="molecule type" value="Genomic_DNA"/>
</dbReference>
<dbReference type="CCDS" id="CCDS1174.1"/>
<dbReference type="PIR" id="A39957">
    <property type="entry name" value="HLHUCD"/>
</dbReference>
<dbReference type="RefSeq" id="NP_001307581.1">
    <property type="nucleotide sequence ID" value="NM_001320652.1"/>
</dbReference>
<dbReference type="RefSeq" id="NP_001754.2">
    <property type="nucleotide sequence ID" value="NM_001763.3"/>
</dbReference>
<dbReference type="PDB" id="1ONQ">
    <property type="method" value="X-ray"/>
    <property type="resolution" value="2.15 A"/>
    <property type="chains" value="A/C=18-294"/>
</dbReference>
<dbReference type="PDB" id="1XZ0">
    <property type="method" value="X-ray"/>
    <property type="resolution" value="2.80 A"/>
    <property type="chains" value="A/C=18-294"/>
</dbReference>
<dbReference type="PDB" id="4X6C">
    <property type="method" value="X-ray"/>
    <property type="resolution" value="2.80 A"/>
    <property type="chains" value="A/C=21-295"/>
</dbReference>
<dbReference type="PDB" id="4X6D">
    <property type="method" value="X-ray"/>
    <property type="resolution" value="2.98 A"/>
    <property type="chains" value="A/C=21-295"/>
</dbReference>
<dbReference type="PDB" id="4X6E">
    <property type="method" value="X-ray"/>
    <property type="resolution" value="2.10 A"/>
    <property type="chains" value="A=21-295"/>
</dbReference>
<dbReference type="PDB" id="4X6F">
    <property type="method" value="X-ray"/>
    <property type="resolution" value="1.91 A"/>
    <property type="chains" value="A=21-295"/>
</dbReference>
<dbReference type="PDB" id="5J1A">
    <property type="method" value="X-ray"/>
    <property type="resolution" value="1.86 A"/>
    <property type="chains" value="A=1-295"/>
</dbReference>
<dbReference type="PDB" id="6NUX">
    <property type="method" value="X-ray"/>
    <property type="resolution" value="2.20 A"/>
    <property type="chains" value="A=21-295"/>
</dbReference>
<dbReference type="PDB" id="7KOZ">
    <property type="method" value="X-ray"/>
    <property type="resolution" value="2.25 A"/>
    <property type="chains" value="A=18-295"/>
</dbReference>
<dbReference type="PDB" id="7KP0">
    <property type="method" value="X-ray"/>
    <property type="resolution" value="2.40 A"/>
    <property type="chains" value="A=18-295"/>
</dbReference>
<dbReference type="PDB" id="7KP1">
    <property type="method" value="X-ray"/>
    <property type="resolution" value="2.02 A"/>
    <property type="chains" value="A=18-295"/>
</dbReference>
<dbReference type="PDB" id="7RYM">
    <property type="method" value="X-ray"/>
    <property type="resolution" value="3.20 A"/>
    <property type="chains" value="A=18-295"/>
</dbReference>
<dbReference type="PDB" id="7RYN">
    <property type="method" value="X-ray"/>
    <property type="resolution" value="2.70 A"/>
    <property type="chains" value="A=18-295"/>
</dbReference>
<dbReference type="PDB" id="7RYO">
    <property type="method" value="X-ray"/>
    <property type="resolution" value="3.00 A"/>
    <property type="chains" value="A=18-295"/>
</dbReference>
<dbReference type="PDB" id="7SH4">
    <property type="method" value="X-ray"/>
    <property type="resolution" value="2.00 A"/>
    <property type="chains" value="A=18-295"/>
</dbReference>
<dbReference type="PDBsum" id="1ONQ"/>
<dbReference type="PDBsum" id="1XZ0"/>
<dbReference type="PDBsum" id="4X6C"/>
<dbReference type="PDBsum" id="4X6D"/>
<dbReference type="PDBsum" id="4X6E"/>
<dbReference type="PDBsum" id="4X6F"/>
<dbReference type="PDBsum" id="5J1A"/>
<dbReference type="PDBsum" id="6NUX"/>
<dbReference type="PDBsum" id="7KOZ"/>
<dbReference type="PDBsum" id="7KP0"/>
<dbReference type="PDBsum" id="7KP1"/>
<dbReference type="PDBsum" id="7RYM"/>
<dbReference type="PDBsum" id="7RYN"/>
<dbReference type="PDBsum" id="7RYO"/>
<dbReference type="PDBsum" id="7SH4"/>
<dbReference type="SMR" id="P06126"/>
<dbReference type="BioGRID" id="107347">
    <property type="interactions" value="83"/>
</dbReference>
<dbReference type="FunCoup" id="P06126">
    <property type="interactions" value="273"/>
</dbReference>
<dbReference type="IntAct" id="P06126">
    <property type="interactions" value="70"/>
</dbReference>
<dbReference type="STRING" id="9606.ENSP00000289429"/>
<dbReference type="DrugBank" id="DB00098">
    <property type="generic name" value="Antithymocyte immunoglobulin (rabbit)"/>
</dbReference>
<dbReference type="GlyCosmos" id="P06126">
    <property type="glycosylation" value="4 sites, No reported glycans"/>
</dbReference>
<dbReference type="GlyGen" id="P06126">
    <property type="glycosylation" value="5 sites"/>
</dbReference>
<dbReference type="iPTMnet" id="P06126"/>
<dbReference type="PhosphoSitePlus" id="P06126"/>
<dbReference type="SwissPalm" id="P06126"/>
<dbReference type="BioMuta" id="CD1A"/>
<dbReference type="DMDM" id="288558852"/>
<dbReference type="MassIVE" id="P06126"/>
<dbReference type="PaxDb" id="9606-ENSP00000289429"/>
<dbReference type="PeptideAtlas" id="P06126"/>
<dbReference type="ProteomicsDB" id="51868"/>
<dbReference type="ABCD" id="P06126">
    <property type="antibodies" value="1 sequenced antibody"/>
</dbReference>
<dbReference type="Antibodypedia" id="2533">
    <property type="antibodies" value="2113 antibodies from 49 providers"/>
</dbReference>
<dbReference type="DNASU" id="909"/>
<dbReference type="Ensembl" id="ENST00000289429.6">
    <property type="protein sequence ID" value="ENSP00000289429.5"/>
    <property type="gene ID" value="ENSG00000158477.7"/>
</dbReference>
<dbReference type="GeneID" id="909"/>
<dbReference type="KEGG" id="hsa:909"/>
<dbReference type="MANE-Select" id="ENST00000289429.6">
    <property type="protein sequence ID" value="ENSP00000289429.5"/>
    <property type="RefSeq nucleotide sequence ID" value="NM_001763.3"/>
    <property type="RefSeq protein sequence ID" value="NP_001754.2"/>
</dbReference>
<dbReference type="UCSC" id="uc001frt.4">
    <property type="organism name" value="human"/>
</dbReference>
<dbReference type="AGR" id="HGNC:1634"/>
<dbReference type="CTD" id="909"/>
<dbReference type="DisGeNET" id="909"/>
<dbReference type="GeneCards" id="CD1A"/>
<dbReference type="HGNC" id="HGNC:1634">
    <property type="gene designation" value="CD1A"/>
</dbReference>
<dbReference type="HPA" id="ENSG00000158477">
    <property type="expression patterns" value="Tissue enriched (lymphoid)"/>
</dbReference>
<dbReference type="MIM" id="188370">
    <property type="type" value="gene"/>
</dbReference>
<dbReference type="neXtProt" id="NX_P06126"/>
<dbReference type="OpenTargets" id="ENSG00000158477"/>
<dbReference type="PharmGKB" id="PA26193"/>
<dbReference type="VEuPathDB" id="HostDB:ENSG00000158477"/>
<dbReference type="eggNOG" id="ENOG502SJH6">
    <property type="taxonomic scope" value="Eukaryota"/>
</dbReference>
<dbReference type="GeneTree" id="ENSGT01120000271825"/>
<dbReference type="HOGENOM" id="CLU_047501_9_2_1"/>
<dbReference type="InParanoid" id="P06126"/>
<dbReference type="OMA" id="TCCKPSN"/>
<dbReference type="OrthoDB" id="8890485at2759"/>
<dbReference type="PAN-GO" id="P06126">
    <property type="GO annotations" value="9 GO annotations based on evolutionary models"/>
</dbReference>
<dbReference type="PhylomeDB" id="P06126"/>
<dbReference type="TreeFam" id="TF336723"/>
<dbReference type="PathwayCommons" id="P06126"/>
<dbReference type="Reactome" id="R-HSA-198933">
    <property type="pathway name" value="Immunoregulatory interactions between a Lymphoid and a non-Lymphoid cell"/>
</dbReference>
<dbReference type="SignaLink" id="P06126"/>
<dbReference type="BioGRID-ORCS" id="909">
    <property type="hits" value="8 hits in 1151 CRISPR screens"/>
</dbReference>
<dbReference type="EvolutionaryTrace" id="P06126"/>
<dbReference type="GeneWiki" id="CD1A"/>
<dbReference type="GenomeRNAi" id="909"/>
<dbReference type="Pharos" id="P06126">
    <property type="development level" value="Tbio"/>
</dbReference>
<dbReference type="PRO" id="PR:P06126"/>
<dbReference type="Proteomes" id="UP000005640">
    <property type="component" value="Chromosome 1"/>
</dbReference>
<dbReference type="RNAct" id="P06126">
    <property type="molecule type" value="protein"/>
</dbReference>
<dbReference type="Bgee" id="ENSG00000158477">
    <property type="expression patterns" value="Expressed in thymus and 67 other cell types or tissues"/>
</dbReference>
<dbReference type="GO" id="GO:0010008">
    <property type="term" value="C:endosome membrane"/>
    <property type="evidence" value="ECO:0007669"/>
    <property type="project" value="UniProtKB-SubCell"/>
</dbReference>
<dbReference type="GO" id="GO:0009897">
    <property type="term" value="C:external side of plasma membrane"/>
    <property type="evidence" value="ECO:0000318"/>
    <property type="project" value="GO_Central"/>
</dbReference>
<dbReference type="GO" id="GO:0005615">
    <property type="term" value="C:extracellular space"/>
    <property type="evidence" value="ECO:0000318"/>
    <property type="project" value="GO_Central"/>
</dbReference>
<dbReference type="GO" id="GO:0045121">
    <property type="term" value="C:membrane raft"/>
    <property type="evidence" value="ECO:0007669"/>
    <property type="project" value="UniProtKB-SubCell"/>
</dbReference>
<dbReference type="GO" id="GO:0005886">
    <property type="term" value="C:plasma membrane"/>
    <property type="evidence" value="ECO:0000304"/>
    <property type="project" value="Reactome"/>
</dbReference>
<dbReference type="GO" id="GO:0030883">
    <property type="term" value="F:endogenous lipid antigen binding"/>
    <property type="evidence" value="ECO:0000318"/>
    <property type="project" value="GO_Central"/>
</dbReference>
<dbReference type="GO" id="GO:0030884">
    <property type="term" value="F:exogenous lipid antigen binding"/>
    <property type="evidence" value="ECO:0000318"/>
    <property type="project" value="GO_Central"/>
</dbReference>
<dbReference type="GO" id="GO:0071723">
    <property type="term" value="F:lipopeptide binding"/>
    <property type="evidence" value="ECO:0000318"/>
    <property type="project" value="GO_Central"/>
</dbReference>
<dbReference type="GO" id="GO:0002250">
    <property type="term" value="P:adaptive immune response"/>
    <property type="evidence" value="ECO:0007669"/>
    <property type="project" value="UniProtKB-KW"/>
</dbReference>
<dbReference type="GO" id="GO:0048006">
    <property type="term" value="P:antigen processing and presentation, endogenous lipid antigen via MHC class Ib"/>
    <property type="evidence" value="ECO:0000318"/>
    <property type="project" value="GO_Central"/>
</dbReference>
<dbReference type="GO" id="GO:0048007">
    <property type="term" value="P:antigen processing and presentation, exogenous lipid antigen via MHC class Ib"/>
    <property type="evidence" value="ECO:0000318"/>
    <property type="project" value="GO_Central"/>
</dbReference>
<dbReference type="GO" id="GO:0006955">
    <property type="term" value="P:immune response"/>
    <property type="evidence" value="ECO:0000318"/>
    <property type="project" value="GO_Central"/>
</dbReference>
<dbReference type="GO" id="GO:0001916">
    <property type="term" value="P:positive regulation of T cell mediated cytotoxicity"/>
    <property type="evidence" value="ECO:0000318"/>
    <property type="project" value="GO_Central"/>
</dbReference>
<dbReference type="CDD" id="cd21029">
    <property type="entry name" value="IgC1_CD1"/>
    <property type="match status" value="1"/>
</dbReference>
<dbReference type="FunFam" id="2.60.40.10:FF:000254">
    <property type="entry name" value="Antigen-presenting glycoprotein CD1d1"/>
    <property type="match status" value="1"/>
</dbReference>
<dbReference type="FunFam" id="3.30.500.10:FF:000002">
    <property type="entry name" value="Antigen-presenting glycoprotein CD1d1"/>
    <property type="match status" value="1"/>
</dbReference>
<dbReference type="Gene3D" id="2.60.40.10">
    <property type="entry name" value="Immunoglobulins"/>
    <property type="match status" value="1"/>
</dbReference>
<dbReference type="Gene3D" id="3.30.500.10">
    <property type="entry name" value="MHC class I-like antigen recognition-like"/>
    <property type="match status" value="1"/>
</dbReference>
<dbReference type="InterPro" id="IPR007110">
    <property type="entry name" value="Ig-like_dom"/>
</dbReference>
<dbReference type="InterPro" id="IPR036179">
    <property type="entry name" value="Ig-like_dom_sf"/>
</dbReference>
<dbReference type="InterPro" id="IPR013783">
    <property type="entry name" value="Ig-like_fold"/>
</dbReference>
<dbReference type="InterPro" id="IPR003597">
    <property type="entry name" value="Ig_C1-set"/>
</dbReference>
<dbReference type="InterPro" id="IPR050208">
    <property type="entry name" value="MHC_class-I_related"/>
</dbReference>
<dbReference type="InterPro" id="IPR011161">
    <property type="entry name" value="MHC_I-like_Ag-recog"/>
</dbReference>
<dbReference type="InterPro" id="IPR037055">
    <property type="entry name" value="MHC_I-like_Ag-recog_sf"/>
</dbReference>
<dbReference type="InterPro" id="IPR011162">
    <property type="entry name" value="MHC_I/II-like_Ag-recog"/>
</dbReference>
<dbReference type="PANTHER" id="PTHR16675">
    <property type="entry name" value="MHC CLASS I-RELATED"/>
    <property type="match status" value="1"/>
</dbReference>
<dbReference type="PANTHER" id="PTHR16675:SF160">
    <property type="entry name" value="T-CELL SURFACE GLYCOPROTEIN CD1A"/>
    <property type="match status" value="1"/>
</dbReference>
<dbReference type="Pfam" id="PF07654">
    <property type="entry name" value="C1-set"/>
    <property type="match status" value="1"/>
</dbReference>
<dbReference type="Pfam" id="PF16497">
    <property type="entry name" value="MHC_I_3"/>
    <property type="match status" value="1"/>
</dbReference>
<dbReference type="SMART" id="SM00407">
    <property type="entry name" value="IGc1"/>
    <property type="match status" value="1"/>
</dbReference>
<dbReference type="SUPFAM" id="SSF48726">
    <property type="entry name" value="Immunoglobulin"/>
    <property type="match status" value="1"/>
</dbReference>
<dbReference type="SUPFAM" id="SSF54452">
    <property type="entry name" value="MHC antigen-recognition domain"/>
    <property type="match status" value="1"/>
</dbReference>
<dbReference type="PROSITE" id="PS50835">
    <property type="entry name" value="IG_LIKE"/>
    <property type="match status" value="1"/>
</dbReference>
<name>CD1A_HUMAN</name>
<organism>
    <name type="scientific">Homo sapiens</name>
    <name type="common">Human</name>
    <dbReference type="NCBI Taxonomy" id="9606"/>
    <lineage>
        <taxon>Eukaryota</taxon>
        <taxon>Metazoa</taxon>
        <taxon>Chordata</taxon>
        <taxon>Craniata</taxon>
        <taxon>Vertebrata</taxon>
        <taxon>Euteleostomi</taxon>
        <taxon>Mammalia</taxon>
        <taxon>Eutheria</taxon>
        <taxon>Euarchontoglires</taxon>
        <taxon>Primates</taxon>
        <taxon>Haplorrhini</taxon>
        <taxon>Catarrhini</taxon>
        <taxon>Hominidae</taxon>
        <taxon>Homo</taxon>
    </lineage>
</organism>